<accession>P28062</accession>
<accession>B0UZC0</accession>
<accession>Q29824</accession>
<accession>Q5JNW6</accession>
<accession>Q5QNR8</accession>
<accession>Q96J48</accession>
<proteinExistence type="evidence at protein level"/>
<protein>
    <recommendedName>
        <fullName>Proteasome subunit beta type-8</fullName>
        <ecNumber>3.4.25.1</ecNumber>
    </recommendedName>
    <alternativeName>
        <fullName>Low molecular mass protein 7</fullName>
    </alternativeName>
    <alternativeName>
        <fullName>Macropain subunit C13</fullName>
    </alternativeName>
    <alternativeName>
        <fullName>Multicatalytic endopeptidase complex subunit C13</fullName>
    </alternativeName>
    <alternativeName>
        <fullName>Proteasome component C13</fullName>
    </alternativeName>
    <alternativeName>
        <fullName>Proteasome subunit beta-5i</fullName>
    </alternativeName>
    <alternativeName>
        <fullName>Really interesting new gene 10 protein</fullName>
    </alternativeName>
</protein>
<feature type="propeptide" id="PRO_0000026597" description="Removed in mature form" evidence="1">
    <location>
        <begin position="1"/>
        <end position="72"/>
    </location>
</feature>
<feature type="chain" id="PRO_0000026598" description="Proteasome subunit beta type-8">
    <location>
        <begin position="73"/>
        <end position="276"/>
    </location>
</feature>
<feature type="region of interest" description="Disordered" evidence="4">
    <location>
        <begin position="1"/>
        <end position="33"/>
    </location>
</feature>
<feature type="active site" description="Nucleophile" evidence="1">
    <location>
        <position position="73"/>
    </location>
</feature>
<feature type="site" description="Cleavage; by autolysis" evidence="2">
    <location>
        <begin position="72"/>
        <end position="73"/>
    </location>
</feature>
<feature type="splice variant" id="VSP_005287" description="In isoform 2." evidence="28 29">
    <original>MALLDVCGAPRGQRPESALPVAGSGRRSDPGHYSFSMRSPELALPRGMQ</original>
    <variation>MLIGTPTPRDTTPSSWLTSSLLVEAAPLDDTTLPTPVSSGCPGLE</variation>
    <location>
        <begin position="1"/>
        <end position="49"/>
    </location>
</feature>
<feature type="sequence variant" id="VAR_006488" description="In allele LMP7C; dbSNP:rs114772012.">
    <original>G</original>
    <variation>R</variation>
    <location>
        <position position="8"/>
    </location>
</feature>
<feature type="sequence variant" id="VAR_006489" description="In allele LPM7C.">
    <original>PGH</original>
    <variation>RPD</variation>
    <location>
        <begin position="30"/>
        <end position="32"/>
    </location>
</feature>
<feature type="sequence variant" id="VAR_065204" description="In dbSNP:rs2071543." evidence="27">
    <original>Q</original>
    <variation>K</variation>
    <location>
        <position position="49"/>
    </location>
</feature>
<feature type="sequence variant" id="VAR_057046" description="In dbSNP:rs17220206.">
    <original>T</original>
    <variation>S</variation>
    <location>
        <position position="74"/>
    </location>
</feature>
<feature type="sequence variant" id="VAR_065291" description="In PRAAS1; markedly decreased chymotrypsin-like activity consistent with a decrease in proteasomal activity and loss of function; some patients are heterozygotes for this mutation and also carry a mutation in PSMA3; patients' cells show reduction of proteasome content and endopeptidase activity of the proteasome; dbSNP:rs748082671." evidence="18 22">
    <original>T</original>
    <variation>M</variation>
    <location>
        <position position="75"/>
    </location>
</feature>
<feature type="sequence variant" id="VAR_075256" description="In PRAAS1; uncertain significance." evidence="23">
    <original>A</original>
    <variation>P</variation>
    <location>
        <position position="94"/>
    </location>
</feature>
<feature type="sequence variant" id="VAR_075257" description="In PRAAS1; some patients are heterozygotes for this mutation and also carry a mutation in PSMB4; dbSNP:rs1554239543." evidence="22">
    <original>K</original>
    <variation>Q</variation>
    <location>
        <position position="105"/>
    </location>
</feature>
<feature type="sequence variant" id="VAR_066449" description="In PRAAS1; affects immunoproteasome assembly; reduced proteasome levels; reduced chymotrypsin-like activity consistent with a decrease in proteasomal activity; dbSNP:rs387906680." evidence="19 20">
    <original>G</original>
    <variation>V</variation>
    <location>
        <position position="201"/>
    </location>
</feature>
<feature type="strand" evidence="31">
    <location>
        <begin position="75"/>
        <end position="80"/>
    </location>
</feature>
<feature type="strand" evidence="31">
    <location>
        <begin position="83"/>
        <end position="88"/>
    </location>
</feature>
<feature type="strand" evidence="31">
    <location>
        <begin position="92"/>
        <end position="94"/>
    </location>
</feature>
<feature type="strand" evidence="31">
    <location>
        <begin position="97"/>
        <end position="101"/>
    </location>
</feature>
<feature type="strand" evidence="31">
    <location>
        <begin position="106"/>
        <end position="110"/>
    </location>
</feature>
<feature type="strand" evidence="31">
    <location>
        <begin position="113"/>
        <end position="116"/>
    </location>
</feature>
<feature type="helix" evidence="31">
    <location>
        <begin position="121"/>
        <end position="142"/>
    </location>
</feature>
<feature type="helix" evidence="31">
    <location>
        <begin position="148"/>
        <end position="161"/>
    </location>
</feature>
<feature type="turn" evidence="31">
    <location>
        <begin position="162"/>
        <end position="164"/>
    </location>
</feature>
<feature type="strand" evidence="31">
    <location>
        <begin position="169"/>
        <end position="177"/>
    </location>
</feature>
<feature type="strand" evidence="31">
    <location>
        <begin position="180"/>
        <end position="186"/>
    </location>
</feature>
<feature type="strand" evidence="31">
    <location>
        <begin position="192"/>
        <end position="194"/>
    </location>
</feature>
<feature type="strand" evidence="31">
    <location>
        <begin position="196"/>
        <end position="201"/>
    </location>
</feature>
<feature type="helix" evidence="31">
    <location>
        <begin position="204"/>
        <end position="214"/>
    </location>
</feature>
<feature type="helix" evidence="31">
    <location>
        <begin position="221"/>
        <end position="238"/>
    </location>
</feature>
<feature type="strand" evidence="31">
    <location>
        <begin position="244"/>
        <end position="252"/>
    </location>
</feature>
<feature type="strand" evidence="31">
    <location>
        <begin position="255"/>
        <end position="263"/>
    </location>
</feature>
<feature type="helix" evidence="31">
    <location>
        <begin position="264"/>
        <end position="273"/>
    </location>
</feature>
<feature type="modified residue" description="Phosphothreonine" evidence="30">
    <location sequence="P28062-2">
        <position position="5"/>
    </location>
</feature>
<keyword id="KW-0002">3D-structure</keyword>
<keyword id="KW-0025">Alternative splicing</keyword>
<keyword id="KW-0963">Cytoplasm</keyword>
<keyword id="KW-0221">Differentiation</keyword>
<keyword id="KW-0225">Disease variant</keyword>
<keyword id="KW-0945">Host-virus interaction</keyword>
<keyword id="KW-0378">Hydrolase</keyword>
<keyword id="KW-0391">Immunity</keyword>
<keyword id="KW-0539">Nucleus</keyword>
<keyword id="KW-0597">Phosphoprotein</keyword>
<keyword id="KW-0645">Protease</keyword>
<keyword id="KW-0647">Proteasome</keyword>
<keyword id="KW-1267">Proteomics identification</keyword>
<keyword id="KW-1185">Reference proteome</keyword>
<keyword id="KW-0888">Threonine protease</keyword>
<keyword id="KW-0865">Zymogen</keyword>
<sequence length="276" mass="30354">MALLDVCGAPRGQRPESALPVAGSGRRSDPGHYSFSMRSPELALPRGMQPTEFFQSLGGDGERNVQIEMAHGTTTLAFKFQHGVIAAVDSRASAGSYISALRVNKVIEINPYLLGTMSGCAADCQYWERLLAKECRLYYLRNGERISVSAASKLLSNMMCQYRGMGLSMGSMICGWDKKGPGLYYVDEHGTRLSGNMFSTGSGNTYAYGVMDSGYRPNLSPEEAYDLGRRAIAYATHRDSYSGGVVNMYHMKEDGWVKVESTDVSDLLHQYREANQ</sequence>
<name>PSB8_HUMAN</name>
<gene>
    <name type="primary">PSMB8</name>
    <name type="synonym">LMP7</name>
    <name type="synonym">PSMB5i</name>
    <name type="synonym">RING10</name>
    <name type="synonym">Y2</name>
</gene>
<reference key="1">
    <citation type="journal article" date="1993" name="Eur. J. Immunol.">
        <title>The major histocompatibility complex-encoded proteasome component LMP7: alternative first exons and post-translational processing.</title>
        <authorList>
            <person name="Glynne R."/>
            <person name="Kerr L.A."/>
            <person name="Mockridge I."/>
            <person name="Beck S."/>
            <person name="Kelly A."/>
            <person name="Trowsdale J."/>
        </authorList>
    </citation>
    <scope>NUCLEOTIDE SEQUENCE [GENOMIC DNA]</scope>
</reference>
<reference key="2">
    <citation type="journal article" date="1992" name="J. Mol. Biol.">
        <title>DNA sequence analysis of 66 kb of the human MHC class II region encoding a cluster of genes for antigen processing.</title>
        <authorList>
            <person name="Beck S."/>
            <person name="Kelly A."/>
            <person name="Radley E."/>
            <person name="Khurshid F."/>
            <person name="Alderton R.P."/>
            <person name="Trowsdale J."/>
        </authorList>
    </citation>
    <scope>NUCLEOTIDE SEQUENCE [GENOMIC DNA]</scope>
</reference>
<reference key="3">
    <citation type="journal article" date="1991" name="Nature">
        <title>A proteasome-related gene between the two ABC transporter loci in the class II region of the human MHC.</title>
        <authorList>
            <person name="Glynne R."/>
            <person name="Powis S.H."/>
            <person name="Beck S."/>
            <person name="Kelly A."/>
            <person name="Kerr L.A."/>
            <person name="Trowsdale J."/>
        </authorList>
    </citation>
    <scope>NUCLEOTIDE SEQUENCE [MRNA] (ISOFORM 2)</scope>
</reference>
<reference key="4">
    <citation type="journal article" date="1992" name="J. Biol. Chem.">
        <title>Alternative exon usage and processing of the major histocompatibility complex-encoded proteasome subunits.</title>
        <authorList>
            <person name="Fruh K."/>
            <person name="Yang Y."/>
            <person name="Arnold D."/>
            <person name="Chambers J."/>
            <person name="Wu L."/>
            <person name="Waters J.B."/>
            <person name="Spies T."/>
            <person name="Peterson P.A."/>
        </authorList>
    </citation>
    <scope>NUCLEOTIDE SEQUENCE [GENOMIC DNA]</scope>
</reference>
<reference key="5">
    <citation type="journal article" date="1993" name="Immunogenetics">
        <title>Different genomic structure of mouse and human Lmp7 genes: characterization of MHC-encoded proteasome genes.</title>
        <authorList>
            <person name="Meinhardt T."/>
            <person name="Graf U."/>
            <person name="Hammerling G.J."/>
        </authorList>
    </citation>
    <scope>NUCLEOTIDE SEQUENCE [GENOMIC DNA]</scope>
</reference>
<reference key="6">
    <citation type="journal article" date="1996" name="J. Mol. Biol.">
        <title>Evolutionary dynamics of non-coding sequences within the class II region of the human MHC.</title>
        <authorList>
            <person name="Beck S."/>
            <person name="Abdulla S."/>
            <person name="Alderton R.P."/>
            <person name="Glynne R.J."/>
            <person name="Gut I.G."/>
            <person name="Hosking L.K."/>
            <person name="Jackson A."/>
            <person name="Kelly A."/>
            <person name="Newell W.R."/>
            <person name="Sanseau P."/>
            <person name="Radley E."/>
            <person name="Thorpe K.L."/>
            <person name="Trowsdale J."/>
        </authorList>
    </citation>
    <scope>NUCLEOTIDE SEQUENCE [GENOMIC DNA]</scope>
</reference>
<reference key="7">
    <citation type="submission" date="1994-11" db="EMBL/GenBank/DDBJ databases">
        <title>Sequence analysis of the HLA-linked LMP7 gene.</title>
        <authorList>
            <person name="Maksymowych W.P."/>
        </authorList>
    </citation>
    <scope>NUCLEOTIDE SEQUENCE [MRNA] (ALLELE LMP7C)</scope>
    <scope>VARIANT LYS-49</scope>
</reference>
<reference key="8">
    <citation type="journal article" date="2003" name="Nature">
        <title>The DNA sequence and analysis of human chromosome 6.</title>
        <authorList>
            <person name="Mungall A.J."/>
            <person name="Palmer S.A."/>
            <person name="Sims S.K."/>
            <person name="Edwards C.A."/>
            <person name="Ashurst J.L."/>
            <person name="Wilming L."/>
            <person name="Jones M.C."/>
            <person name="Horton R."/>
            <person name="Hunt S.E."/>
            <person name="Scott C.E."/>
            <person name="Gilbert J.G.R."/>
            <person name="Clamp M.E."/>
            <person name="Bethel G."/>
            <person name="Milne S."/>
            <person name="Ainscough R."/>
            <person name="Almeida J.P."/>
            <person name="Ambrose K.D."/>
            <person name="Andrews T.D."/>
            <person name="Ashwell R.I.S."/>
            <person name="Babbage A.K."/>
            <person name="Bagguley C.L."/>
            <person name="Bailey J."/>
            <person name="Banerjee R."/>
            <person name="Barker D.J."/>
            <person name="Barlow K.F."/>
            <person name="Bates K."/>
            <person name="Beare D.M."/>
            <person name="Beasley H."/>
            <person name="Beasley O."/>
            <person name="Bird C.P."/>
            <person name="Blakey S.E."/>
            <person name="Bray-Allen S."/>
            <person name="Brook J."/>
            <person name="Brown A.J."/>
            <person name="Brown J.Y."/>
            <person name="Burford D.C."/>
            <person name="Burrill W."/>
            <person name="Burton J."/>
            <person name="Carder C."/>
            <person name="Carter N.P."/>
            <person name="Chapman J.C."/>
            <person name="Clark S.Y."/>
            <person name="Clark G."/>
            <person name="Clee C.M."/>
            <person name="Clegg S."/>
            <person name="Cobley V."/>
            <person name="Collier R.E."/>
            <person name="Collins J.E."/>
            <person name="Colman L.K."/>
            <person name="Corby N.R."/>
            <person name="Coville G.J."/>
            <person name="Culley K.M."/>
            <person name="Dhami P."/>
            <person name="Davies J."/>
            <person name="Dunn M."/>
            <person name="Earthrowl M.E."/>
            <person name="Ellington A.E."/>
            <person name="Evans K.A."/>
            <person name="Faulkner L."/>
            <person name="Francis M.D."/>
            <person name="Frankish A."/>
            <person name="Frankland J."/>
            <person name="French L."/>
            <person name="Garner P."/>
            <person name="Garnett J."/>
            <person name="Ghori M.J."/>
            <person name="Gilby L.M."/>
            <person name="Gillson C.J."/>
            <person name="Glithero R.J."/>
            <person name="Grafham D.V."/>
            <person name="Grant M."/>
            <person name="Gribble S."/>
            <person name="Griffiths C."/>
            <person name="Griffiths M.N.D."/>
            <person name="Hall R."/>
            <person name="Halls K.S."/>
            <person name="Hammond S."/>
            <person name="Harley J.L."/>
            <person name="Hart E.A."/>
            <person name="Heath P.D."/>
            <person name="Heathcott R."/>
            <person name="Holmes S.J."/>
            <person name="Howden P.J."/>
            <person name="Howe K.L."/>
            <person name="Howell G.R."/>
            <person name="Huckle E."/>
            <person name="Humphray S.J."/>
            <person name="Humphries M.D."/>
            <person name="Hunt A.R."/>
            <person name="Johnson C.M."/>
            <person name="Joy A.A."/>
            <person name="Kay M."/>
            <person name="Keenan S.J."/>
            <person name="Kimberley A.M."/>
            <person name="King A."/>
            <person name="Laird G.K."/>
            <person name="Langford C."/>
            <person name="Lawlor S."/>
            <person name="Leongamornlert D.A."/>
            <person name="Leversha M."/>
            <person name="Lloyd C.R."/>
            <person name="Lloyd D.M."/>
            <person name="Loveland J.E."/>
            <person name="Lovell J."/>
            <person name="Martin S."/>
            <person name="Mashreghi-Mohammadi M."/>
            <person name="Maslen G.L."/>
            <person name="Matthews L."/>
            <person name="McCann O.T."/>
            <person name="McLaren S.J."/>
            <person name="McLay K."/>
            <person name="McMurray A."/>
            <person name="Moore M.J.F."/>
            <person name="Mullikin J.C."/>
            <person name="Niblett D."/>
            <person name="Nickerson T."/>
            <person name="Novik K.L."/>
            <person name="Oliver K."/>
            <person name="Overton-Larty E.K."/>
            <person name="Parker A."/>
            <person name="Patel R."/>
            <person name="Pearce A.V."/>
            <person name="Peck A.I."/>
            <person name="Phillimore B.J.C.T."/>
            <person name="Phillips S."/>
            <person name="Plumb R.W."/>
            <person name="Porter K.M."/>
            <person name="Ramsey Y."/>
            <person name="Ranby S.A."/>
            <person name="Rice C.M."/>
            <person name="Ross M.T."/>
            <person name="Searle S.M."/>
            <person name="Sehra H.K."/>
            <person name="Sheridan E."/>
            <person name="Skuce C.D."/>
            <person name="Smith S."/>
            <person name="Smith M."/>
            <person name="Spraggon L."/>
            <person name="Squares S.L."/>
            <person name="Steward C.A."/>
            <person name="Sycamore N."/>
            <person name="Tamlyn-Hall G."/>
            <person name="Tester J."/>
            <person name="Theaker A.J."/>
            <person name="Thomas D.W."/>
            <person name="Thorpe A."/>
            <person name="Tracey A."/>
            <person name="Tromans A."/>
            <person name="Tubby B."/>
            <person name="Wall M."/>
            <person name="Wallis J.M."/>
            <person name="West A.P."/>
            <person name="White S.S."/>
            <person name="Whitehead S.L."/>
            <person name="Whittaker H."/>
            <person name="Wild A."/>
            <person name="Willey D.J."/>
            <person name="Wilmer T.E."/>
            <person name="Wood J.M."/>
            <person name="Wray P.W."/>
            <person name="Wyatt J.C."/>
            <person name="Young L."/>
            <person name="Younger R.M."/>
            <person name="Bentley D.R."/>
            <person name="Coulson A."/>
            <person name="Durbin R.M."/>
            <person name="Hubbard T."/>
            <person name="Sulston J.E."/>
            <person name="Dunham I."/>
            <person name="Rogers J."/>
            <person name="Beck S."/>
        </authorList>
    </citation>
    <scope>NUCLEOTIDE SEQUENCE [LARGE SCALE GENOMIC DNA]</scope>
</reference>
<reference key="9">
    <citation type="submission" date="2005-07" db="EMBL/GenBank/DDBJ databases">
        <authorList>
            <person name="Mural R.J."/>
            <person name="Istrail S."/>
            <person name="Sutton G.G."/>
            <person name="Florea L."/>
            <person name="Halpern A.L."/>
            <person name="Mobarry C.M."/>
            <person name="Lippert R."/>
            <person name="Walenz B."/>
            <person name="Shatkay H."/>
            <person name="Dew I."/>
            <person name="Miller J.R."/>
            <person name="Flanigan M.J."/>
            <person name="Edwards N.J."/>
            <person name="Bolanos R."/>
            <person name="Fasulo D."/>
            <person name="Halldorsson B.V."/>
            <person name="Hannenhalli S."/>
            <person name="Turner R."/>
            <person name="Yooseph S."/>
            <person name="Lu F."/>
            <person name="Nusskern D.R."/>
            <person name="Shue B.C."/>
            <person name="Zheng X.H."/>
            <person name="Zhong F."/>
            <person name="Delcher A.L."/>
            <person name="Huson D.H."/>
            <person name="Kravitz S.A."/>
            <person name="Mouchard L."/>
            <person name="Reinert K."/>
            <person name="Remington K.A."/>
            <person name="Clark A.G."/>
            <person name="Waterman M.S."/>
            <person name="Eichler E.E."/>
            <person name="Adams M.D."/>
            <person name="Hunkapiller M.W."/>
            <person name="Myers E.W."/>
            <person name="Venter J.C."/>
        </authorList>
    </citation>
    <scope>NUCLEOTIDE SEQUENCE [LARGE SCALE GENOMIC DNA]</scope>
</reference>
<reference key="10">
    <citation type="journal article" date="2004" name="Genome Res.">
        <title>The status, quality, and expansion of the NIH full-length cDNA project: the Mammalian Gene Collection (MGC).</title>
        <authorList>
            <consortium name="The MGC Project Team"/>
        </authorList>
    </citation>
    <scope>NUCLEOTIDE SEQUENCE [LARGE SCALE MRNA] (ISOFORM 2)</scope>
    <source>
        <tissue>Skin</tissue>
    </source>
</reference>
<reference key="11">
    <citation type="journal article" date="1996" name="Hum. Immunol.">
        <title>Two newly discovered alleles of major histocompatibility complex-encoded LMP7 in Korean populations.</title>
        <authorList>
            <person name="Kim T.G."/>
            <person name="Lee Y.H."/>
            <person name="Choi H.B."/>
            <person name="Han H."/>
        </authorList>
    </citation>
    <scope>NUCLEOTIDE SEQUENCE [GENOMIC DNA] OF 191-269</scope>
    <source>
        <tissue>Blood</tissue>
    </source>
</reference>
<reference key="12">
    <citation type="journal article" date="1994" name="FEBS Lett.">
        <title>Replacement of proteasome subunits X and Y by LMP7 and LMP2 induced by interferon-gamma for acquirement of the functional diversity responsible for antigen processing.</title>
        <authorList>
            <person name="Akiyama K."/>
            <person name="Kagawa S."/>
            <person name="Tamura T."/>
            <person name="Shimbara N."/>
            <person name="Takashina M."/>
            <person name="Kristensen P."/>
            <person name="Hendil K.B."/>
            <person name="Tanaka K."/>
            <person name="Ichihara A."/>
        </authorList>
    </citation>
    <scope>FUNCTION</scope>
</reference>
<reference key="13">
    <citation type="journal article" date="1996" name="J. Biol. Chem.">
        <title>Proteasome subunits X and Y alter peptidase activities in opposite ways to the interferon-gamma-induced subunits LMP2 and LMP7.</title>
        <authorList>
            <person name="Gaczynska M."/>
            <person name="Goldberg A.L."/>
            <person name="Tanaka K."/>
            <person name="Hendil K.B."/>
            <person name="Rock K.L."/>
        </authorList>
    </citation>
    <scope>INDUCTION</scope>
</reference>
<reference key="14">
    <citation type="journal article" date="2001" name="Blood">
        <title>Tumor necrosis factor-alpha induces coordinated changes in major histocompatibility class I presentation pathway, resulting in increased stability of class I complexes at the cell surface.</title>
        <authorList>
            <person name="Hallermalm K."/>
            <person name="Seki K."/>
            <person name="Wei C."/>
            <person name="Castelli C."/>
            <person name="Rivoltini L."/>
            <person name="Kiessling R."/>
            <person name="Levitskaya J."/>
        </authorList>
    </citation>
    <scope>INDUCTION BY TNF AND IFNG</scope>
</reference>
<reference key="15">
    <citation type="journal article" date="2001" name="Int. Immunol.">
        <title>Bipartite regulation of different components of the MHC class I antigen-processing machinery during dendritic cell maturation.</title>
        <authorList>
            <person name="Li J."/>
            <person name="Schuler-Thurner B."/>
            <person name="Schuler G."/>
            <person name="Huber C."/>
            <person name="Seliger B."/>
        </authorList>
    </citation>
    <scope>DEVELOPMENTAL STAGE</scope>
</reference>
<reference key="16">
    <citation type="journal article" date="2003" name="FEBS Lett.">
        <title>Human immunodeficiency virus-1 Tat protein interacts with distinct proteasomal alpha and beta subunits.</title>
        <authorList>
            <person name="Apcher G.S."/>
            <person name="Heink S."/>
            <person name="Zantopf D."/>
            <person name="Kloetzel P.-M."/>
            <person name="Schmid H.-P."/>
            <person name="Mayer R.J."/>
            <person name="Krueger E."/>
        </authorList>
    </citation>
    <scope>INTERACTION WITH HIV-1 TAT (MICROBIAL INFECTION)</scope>
</reference>
<reference key="17">
    <citation type="journal article" date="2004" name="Toxicon">
        <title>Potential effects of tetrodotoxin exposure to human glial cells postulated using microarray approach.</title>
        <authorList>
            <person name="Raghavendra Prasad H.S."/>
            <person name="Qi Z."/>
            <person name="Srinivasan K.N."/>
            <person name="Gopalakrishnakone P."/>
        </authorList>
    </citation>
    <scope>INDUCTION BY TETRODOTOXIN</scope>
</reference>
<reference key="18">
    <citation type="journal article" date="2005" name="FEBS Lett.">
        <title>IRF-1 mediates upregulation of LMP7 by IFN-gamma and concerted expression of immunosubunits of the proteasome.</title>
        <authorList>
            <person name="Namiki S."/>
            <person name="Nakamura T."/>
            <person name="Oshima S."/>
            <person name="Yamazaki M."/>
            <person name="Sekine Y."/>
            <person name="Tsuchiya K."/>
            <person name="Okamoto R."/>
            <person name="Kanai T."/>
            <person name="Watanabe M."/>
        </authorList>
    </citation>
    <scope>INDUCTION BY IFNG AND IRF1</scope>
</reference>
<reference key="19">
    <citation type="journal article" date="2005" name="Mol. Immunol.">
        <title>Cytoplasmic domains of the transporter associated with antigen processing and P-glycoprotein interact with subunits of the proteasome.</title>
        <authorList>
            <person name="Begley G.S."/>
            <person name="Horvath A.R."/>
            <person name="Taylor J.C."/>
            <person name="Higgins C.F."/>
        </authorList>
    </citation>
    <scope>INTERACTION WITH TAP1</scope>
</reference>
<reference key="20">
    <citation type="journal article" date="2005" name="Proc. Natl. Acad. Sci. U.S.A.">
        <title>IFN-gamma-induced immune adaptation of the proteasome system is an accelerated and transient response.</title>
        <authorList>
            <person name="Heink S."/>
            <person name="Ludwig D."/>
            <person name="Kloetzel P.-M."/>
            <person name="Krueger E."/>
        </authorList>
    </citation>
    <scope>INTERACTION WITH POMP</scope>
</reference>
<reference key="21">
    <citation type="journal article" date="2006" name="Cancer Res.">
        <title>Tumor cell lines expressing the proteasome subunit isoform LMP7E1 exhibit immunoproteasome deficiency.</title>
        <authorList>
            <person name="Heink S."/>
            <person name="Fricke B."/>
            <person name="Ludwig D."/>
            <person name="Kloetzel P.M."/>
            <person name="Krueger E."/>
        </authorList>
    </citation>
    <scope>FUNCTION</scope>
</reference>
<reference key="22">
    <citation type="journal article" date="2006" name="J. Immunol.">
        <title>Heat shock up-regulates lmp2 and lmp7 and enhances presentation of immunoproteasome-dependent epitopes.</title>
        <authorList>
            <person name="Callahan M.K."/>
            <person name="Wohlfert E.A."/>
            <person name="Menoret A."/>
            <person name="Srivastava P.K."/>
        </authorList>
    </citation>
    <scope>INDUCTION BY HEAT SHOCK</scope>
</reference>
<reference key="23">
    <citation type="journal article" date="2007" name="Inflamm. Bowel Dis.">
        <title>Genome-wide gene expression differences in Crohn's disease and ulcerative colitis from endoscopic pinch biopsies: insights into distinctive pathogenesis.</title>
        <authorList>
            <person name="Wu F."/>
            <person name="Dassopoulos T."/>
            <person name="Cope L."/>
            <person name="Maitra A."/>
            <person name="Brant S.R."/>
            <person name="Harris M.L."/>
            <person name="Bayless T.M."/>
            <person name="Parmigiani G."/>
            <person name="Chakravarti S."/>
        </authorList>
    </citation>
    <scope>INDUCTION</scope>
</reference>
<reference key="24">
    <citation type="journal article" date="2008" name="Proc. Natl. Acad. Sci. U.S.A.">
        <title>A quantitative atlas of mitotic phosphorylation.</title>
        <authorList>
            <person name="Dephoure N."/>
            <person name="Zhou C."/>
            <person name="Villen J."/>
            <person name="Beausoleil S.A."/>
            <person name="Bakalarski C.E."/>
            <person name="Elledge S.J."/>
            <person name="Gygi S.P."/>
        </authorList>
    </citation>
    <scope>PHOSPHORYLATION [LARGE SCALE ANALYSIS] AT THR-5 (ISOFORM 2)</scope>
    <scope>IDENTIFICATION BY MASS SPECTROMETRY [LARGE SCALE ANALYSIS]</scope>
    <source>
        <tissue>Cervix carcinoma</tissue>
    </source>
</reference>
<reference key="25">
    <citation type="journal article" date="2009" name="Arterioscler. Thromb. Vasc. Biol.">
        <title>Cardiovascular inflammation and lesion cell apoptosis: a novel connection via the interferon-inducible immunoproteasome.</title>
        <authorList>
            <person name="Yang Z."/>
            <person name="Gagarin D."/>
            <person name="St Laurent G. III"/>
            <person name="Hammell N."/>
            <person name="Toma I."/>
            <person name="Hu C.A."/>
            <person name="Iwasa A."/>
            <person name="McCaffrey T.A."/>
        </authorList>
    </citation>
    <scope>INDUCTION BY IFNG</scope>
    <scope>FUNCTION</scope>
</reference>
<reference key="26">
    <citation type="journal article" date="2009" name="Immunobiology">
        <title>Herpes simplex virus type I infection of mature dendritic cells leads to reduced LMP7-mRNA-expression levels.</title>
        <authorList>
            <person name="Eisemann J."/>
            <person name="Prechtel A.T."/>
            <person name="Muehl-Zuerbes P."/>
            <person name="Steinkasserer A."/>
            <person name="Kummer M."/>
        </authorList>
    </citation>
    <scope>INDUCTION</scope>
</reference>
<reference key="27">
    <citation type="journal article" date="2009" name="Nat. Med.">
        <title>A selective inhibitor of the immunoproteasome subunit LMP7 blocks cytokine production and attenuates progression of experimental arthritis.</title>
        <authorList>
            <person name="Muchamuel T."/>
            <person name="Basler M."/>
            <person name="Aujay M.A."/>
            <person name="Suzuki E."/>
            <person name="Kalim K.W."/>
            <person name="Lauer C."/>
            <person name="Sylvain C."/>
            <person name="Ring E.R."/>
            <person name="Shields J."/>
            <person name="Jiang J."/>
            <person name="Shwonek P."/>
            <person name="Parlati F."/>
            <person name="Demo S.D."/>
            <person name="Bennett M.K."/>
            <person name="Kirk C.J."/>
            <person name="Groettrup M."/>
        </authorList>
    </citation>
    <scope>INDUCTION BY PR-957</scope>
</reference>
<reference key="28">
    <citation type="journal article" date="2011" name="BMC Syst. Biol.">
        <title>Initial characterization of the human central proteome.</title>
        <authorList>
            <person name="Burkard T.R."/>
            <person name="Planyavsky M."/>
            <person name="Kaupe I."/>
            <person name="Breitwieser F.P."/>
            <person name="Buerckstuemmer T."/>
            <person name="Bennett K.L."/>
            <person name="Superti-Furga G."/>
            <person name="Colinge J."/>
        </authorList>
    </citation>
    <scope>IDENTIFICATION BY MASS SPECTROMETRY [LARGE SCALE ANALYSIS]</scope>
</reference>
<reference key="29">
    <citation type="journal article" date="2011" name="J. Clin. Invest.">
        <title>A mutation in the immunoproteasome subunit PSMB8 causes autoinflammation and lipodystrophy in humans.</title>
        <authorList>
            <person name="Kitamura A."/>
            <person name="Maekawa Y."/>
            <person name="Uehara H."/>
            <person name="Izumi K."/>
            <person name="Kawachi I."/>
            <person name="Nishizawa M."/>
            <person name="Toyoshima Y."/>
            <person name="Takahashi H."/>
            <person name="Standley D.M."/>
            <person name="Tanaka K."/>
            <person name="Hamazaki J."/>
            <person name="Murata S."/>
            <person name="Obara K."/>
            <person name="Toyoshima I."/>
            <person name="Yasutomo K."/>
        </authorList>
    </citation>
    <scope>FUNCTION IN ADIPOCYTE DIFFERENTIATION</scope>
    <scope>VARIANT PRAAS1 VAL-201</scope>
    <scope>CHARACTERIZATION OF VARIANT PRAAS1 VAL-201</scope>
</reference>
<reference key="30">
    <citation type="journal article" date="2014" name="J. Proteomics">
        <title>An enzyme assisted RP-RPLC approach for in-depth analysis of human liver phosphoproteome.</title>
        <authorList>
            <person name="Bian Y."/>
            <person name="Song C."/>
            <person name="Cheng K."/>
            <person name="Dong M."/>
            <person name="Wang F."/>
            <person name="Huang J."/>
            <person name="Sun D."/>
            <person name="Wang L."/>
            <person name="Ye M."/>
            <person name="Zou H."/>
        </authorList>
    </citation>
    <scope>IDENTIFICATION BY MASS SPECTROMETRY [LARGE SCALE ANALYSIS]</scope>
    <source>
        <tissue>Liver</tissue>
    </source>
</reference>
<reference key="31">
    <citation type="journal article" date="2015" name="Proteomics">
        <title>N-terminome analysis of the human mitochondrial proteome.</title>
        <authorList>
            <person name="Vaca Jacome A.S."/>
            <person name="Rabilloud T."/>
            <person name="Schaeffer-Reiss C."/>
            <person name="Rompais M."/>
            <person name="Ayoub D."/>
            <person name="Lane L."/>
            <person name="Bairoch A."/>
            <person name="Van Dorsselaer A."/>
            <person name="Carapito C."/>
        </authorList>
    </citation>
    <scope>IDENTIFICATION BY MASS SPECTROMETRY [LARGE SCALE ANALYSIS]</scope>
</reference>
<reference key="32">
    <citation type="journal article" date="2016" name="Sci. Rep.">
        <title>Proteasomes generate spliced epitopes by two different mechanisms and as efficiently as non-spliced epitopes.</title>
        <authorList>
            <person name="Ebstein F."/>
            <person name="Textoris-Taube K."/>
            <person name="Keller C."/>
            <person name="Golnik R."/>
            <person name="Vigneron N."/>
            <person name="Van den Eynde B.J."/>
            <person name="Schuler-Thurner B."/>
            <person name="Schadendorf D."/>
            <person name="Lorenz F.K."/>
            <person name="Uckert W."/>
            <person name="Urban S."/>
            <person name="Lehmann A."/>
            <person name="Albrecht-Koepke N."/>
            <person name="Janek K."/>
            <person name="Henklein P."/>
            <person name="Niewienda A."/>
            <person name="Kloetzel P.M."/>
            <person name="Mishto M."/>
        </authorList>
    </citation>
    <scope>FUNCTION</scope>
</reference>
<reference key="33">
    <citation type="journal article" date="2010" name="Am. J. Hum. Genet.">
        <title>PSMB8 encoding the beta5i proteasome subunit is mutated in joint contractures, muscle atrophy, microcytic anemia, and panniculitis-induced lipodystrophy syndrome.</title>
        <authorList>
            <person name="Agarwal A.K."/>
            <person name="Xing C."/>
            <person name="DeMartino G.N."/>
            <person name="Mizrachi D."/>
            <person name="Hernandez M.D."/>
            <person name="Sousa A.B."/>
            <person name="Martinez de Villarreal L."/>
            <person name="dos Santos H.G."/>
            <person name="Garg A."/>
        </authorList>
    </citation>
    <scope>VARIANT PRAAS1 MET-75</scope>
    <scope>CHARACTERIZATION OF VARIANT PRAAS1 MET-75</scope>
</reference>
<reference key="34">
    <citation type="journal article" date="2012" name="Arthritis Rheum.">
        <title>Mutations in proteasome subunit beta type 8 cause chronic atypical neutrophilic dermatosis with lipodystrophy and elevated temperature with evidence of genetic and phenotypic heterogeneity.</title>
        <authorList>
            <person name="Liu Y."/>
            <person name="Ramot Y."/>
            <person name="Torrelo A."/>
            <person name="Paller A.S."/>
            <person name="Si N."/>
            <person name="Babay S."/>
            <person name="Kim P.W."/>
            <person name="Sheikh A."/>
            <person name="Lee C.C."/>
            <person name="Chen Y."/>
            <person name="Vera A."/>
            <person name="Zhang X."/>
            <person name="Goldbach-Mansky R."/>
            <person name="Zlotogorski A."/>
        </authorList>
    </citation>
    <scope>VARIANT PRAAS1 MET-75</scope>
</reference>
<reference key="35">
    <citation type="journal article" date="2011" name="Proc. Natl. Acad. Sci. U.S.A.">
        <title>Proteasome assembly defect due to a proteasome subunit beta type 8 (PSMB8) mutation causes the autoinflammatory disorder, Nakajo-Nishimura syndrome.</title>
        <authorList>
            <person name="Arima K."/>
            <person name="Kinoshita A."/>
            <person name="Mishima H."/>
            <person name="Kanazawa N."/>
            <person name="Kaneko T."/>
            <person name="Mizushima T."/>
            <person name="Ichinose K."/>
            <person name="Nakamura H."/>
            <person name="Tsujino A."/>
            <person name="Kawakami A."/>
            <person name="Matsunaka M."/>
            <person name="Kasagi S."/>
            <person name="Kawano S."/>
            <person name="Kumagai S."/>
            <person name="Ohmura K."/>
            <person name="Mimori T."/>
            <person name="Hirano M."/>
            <person name="Ueno S."/>
            <person name="Tanaka K."/>
            <person name="Tanaka M."/>
            <person name="Toyoshima I."/>
            <person name="Sugino H."/>
            <person name="Yamakawa A."/>
            <person name="Tanaka K."/>
            <person name="Niikawa N."/>
            <person name="Furukawa F."/>
            <person name="Murata S."/>
            <person name="Eguchi K."/>
            <person name="Ida H."/>
            <person name="Yoshiura K."/>
        </authorList>
    </citation>
    <scope>VARIANT PRAAS1 VAL-201</scope>
    <scope>CHARACTERIZATION OF VARIANT PRAAS1 VAL-201</scope>
</reference>
<reference key="36">
    <citation type="journal article" date="2015" name="J. Clin. Invest.">
        <title>Additive loss-of-function proteasome subunit mutations in CANDLE/PRAAS patients promote type I IFN production.</title>
        <authorList>
            <person name="Brehm A."/>
            <person name="Liu Y."/>
            <person name="Sheikh A."/>
            <person name="Marrero B."/>
            <person name="Omoyinmi E."/>
            <person name="Zhou Q."/>
            <person name="Montealegre G."/>
            <person name="Biancotto A."/>
            <person name="Reinhardt A."/>
            <person name="Almeida de Jesus A."/>
            <person name="Pelletier M."/>
            <person name="Tsai W.L."/>
            <person name="Remmers E.F."/>
            <person name="Kardava L."/>
            <person name="Hill S."/>
            <person name="Kim H."/>
            <person name="Lachmann H.J."/>
            <person name="Megarbane A."/>
            <person name="Chae J.J."/>
            <person name="Brady J."/>
            <person name="Castillo R.D."/>
            <person name="Brown D."/>
            <person name="Casano A.V."/>
            <person name="Gao L."/>
            <person name="Chapelle D."/>
            <person name="Huang Y."/>
            <person name="Stone D."/>
            <person name="Chen Y."/>
            <person name="Sotzny F."/>
            <person name="Lee C.C."/>
            <person name="Kastner D.L."/>
            <person name="Torrelo A."/>
            <person name="Zlotogorski A."/>
            <person name="Moir S."/>
            <person name="Gadina M."/>
            <person name="McCoy P."/>
            <person name="Wesley R."/>
            <person name="Rother K.I."/>
            <person name="Hildebrand P.W."/>
            <person name="Brogan P."/>
            <person name="Krueger E."/>
            <person name="Aksentijevich I."/>
            <person name="Goldbach-Mansky R."/>
        </authorList>
    </citation>
    <scope>VARIANTS PRAAS1 MET-75 AND GLN-105</scope>
    <scope>CHARACTERIZATION OF VARIANTS PRAAS1 MET-75</scope>
</reference>
<reference key="37">
    <citation type="journal article" date="2016" name="J. Clin. Invest.">
        <authorList>
            <person name="Brehm A."/>
            <person name="Liu Y."/>
            <person name="Sheikh A."/>
            <person name="Marrero B."/>
            <person name="Omoyinmi E."/>
            <person name="Zhou Q."/>
            <person name="Montealegre G."/>
            <person name="Biancotto A."/>
            <person name="Reinhardt A."/>
            <person name="de Jesus A.A."/>
            <person name="Pelletier M."/>
            <person name="Tsai W.L."/>
            <person name="Remmers E.F."/>
            <person name="Kardava L."/>
            <person name="Hill S."/>
            <person name="Kim H."/>
            <person name="Lachmann H.J."/>
            <person name="Megarbane A."/>
            <person name="Chae J.J."/>
            <person name="Brady J."/>
            <person name="Castillo R.D."/>
            <person name="Brown D."/>
            <person name="Casano A.V."/>
            <person name="Gao L."/>
            <person name="Chapelle D."/>
            <person name="Huang Y."/>
            <person name="Stone D."/>
            <person name="Chen Y."/>
            <person name="Sotzny F."/>
            <person name="Lee C.C."/>
            <person name="Kastner D.L."/>
            <person name="Torrelo A."/>
            <person name="Zlotogorski A."/>
            <person name="Moir S."/>
            <person name="Gadina M."/>
            <person name="McCoy P."/>
            <person name="Wesley R."/>
            <person name="Rother K.I."/>
            <person name="Hildebrand P.W."/>
            <person name="Brogan P."/>
            <person name="Krueger E."/>
            <person name="Aksentijevich I."/>
            <person name="Goldbach-Mansky R."/>
        </authorList>
    </citation>
    <scope>ERRATUM OF PUBMED:26524591</scope>
</reference>
<reference key="38">
    <citation type="journal article" date="2016" name="Eur. J. Pediatr.">
        <title>CANDLE syndrome: chronic atypical neutrophilic dermatosis with lipodystrophy and elevated temperature-a rare case with a novel mutation.</title>
        <authorList>
            <person name="Cavalcante M.P."/>
            <person name="Brunelli J.B."/>
            <person name="Miranda C.C."/>
            <person name="Novak G.V."/>
            <person name="Malle L."/>
            <person name="Aikawa N.E."/>
            <person name="Jesus A.A."/>
            <person name="Silva C.A."/>
        </authorList>
    </citation>
    <scope>VARIANT PRAAS1 PRO-94</scope>
</reference>
<dbReference type="EC" id="3.4.25.1"/>
<dbReference type="EMBL" id="X66401">
    <property type="protein sequence ID" value="CAA47026.1"/>
    <property type="molecule type" value="Genomic_DNA"/>
</dbReference>
<dbReference type="EMBL" id="X62598">
    <property type="protein sequence ID" value="CAA44482.1"/>
    <property type="molecule type" value="mRNA"/>
</dbReference>
<dbReference type="EMBL" id="Z14982">
    <property type="protein sequence ID" value="CAA78705.1"/>
    <property type="molecule type" value="Genomic_DNA"/>
</dbReference>
<dbReference type="EMBL" id="Z14982">
    <property type="protein sequence ID" value="CAA78706.1"/>
    <property type="molecule type" value="Genomic_DNA"/>
</dbReference>
<dbReference type="EMBL" id="L11045">
    <property type="status" value="NOT_ANNOTATED_CDS"/>
    <property type="molecule type" value="Genomic_DNA"/>
</dbReference>
<dbReference type="EMBL" id="X87344">
    <property type="protein sequence ID" value="CAA60786.1"/>
    <property type="molecule type" value="Genomic_DNA"/>
</dbReference>
<dbReference type="EMBL" id="X87344">
    <property type="protein sequence ID" value="CAA60787.1"/>
    <property type="molecule type" value="Genomic_DNA"/>
</dbReference>
<dbReference type="EMBL" id="U17496">
    <property type="protein sequence ID" value="AAA56777.1"/>
    <property type="molecule type" value="mRNA"/>
</dbReference>
<dbReference type="EMBL" id="U17497">
    <property type="protein sequence ID" value="AAA56778.1"/>
    <property type="molecule type" value="mRNA"/>
</dbReference>
<dbReference type="EMBL" id="AL671681">
    <property type="status" value="NOT_ANNOTATED_CDS"/>
    <property type="molecule type" value="Genomic_DNA"/>
</dbReference>
<dbReference type="EMBL" id="AL669918">
    <property type="status" value="NOT_ANNOTATED_CDS"/>
    <property type="molecule type" value="Genomic_DNA"/>
</dbReference>
<dbReference type="EMBL" id="AL935043">
    <property type="status" value="NOT_ANNOTATED_CDS"/>
    <property type="molecule type" value="Genomic_DNA"/>
</dbReference>
<dbReference type="EMBL" id="BX682530">
    <property type="status" value="NOT_ANNOTATED_CDS"/>
    <property type="molecule type" value="Genomic_DNA"/>
</dbReference>
<dbReference type="EMBL" id="BX088556">
    <property type="status" value="NOT_ANNOTATED_CDS"/>
    <property type="molecule type" value="Genomic_DNA"/>
</dbReference>
<dbReference type="EMBL" id="CT009502">
    <property type="status" value="NOT_ANNOTATED_CDS"/>
    <property type="molecule type" value="Genomic_DNA"/>
</dbReference>
<dbReference type="EMBL" id="BX927138">
    <property type="status" value="NOT_ANNOTATED_CDS"/>
    <property type="molecule type" value="Genomic_DNA"/>
</dbReference>
<dbReference type="EMBL" id="CR762476">
    <property type="status" value="NOT_ANNOTATED_CDS"/>
    <property type="molecule type" value="Genomic_DNA"/>
</dbReference>
<dbReference type="EMBL" id="CR753889">
    <property type="status" value="NOT_ANNOTATED_CDS"/>
    <property type="molecule type" value="Genomic_DNA"/>
</dbReference>
<dbReference type="EMBL" id="CH471081">
    <property type="protein sequence ID" value="EAX03644.1"/>
    <property type="molecule type" value="Genomic_DNA"/>
</dbReference>
<dbReference type="EMBL" id="CH471081">
    <property type="protein sequence ID" value="EAX03645.1"/>
    <property type="molecule type" value="Genomic_DNA"/>
</dbReference>
<dbReference type="EMBL" id="BC001114">
    <property type="protein sequence ID" value="AAH01114.1"/>
    <property type="molecule type" value="mRNA"/>
</dbReference>
<dbReference type="EMBL" id="U32863">
    <property type="protein sequence ID" value="AAA80235.1"/>
    <property type="molecule type" value="Genomic_DNA"/>
</dbReference>
<dbReference type="EMBL" id="U32862">
    <property type="protein sequence ID" value="AAA80234.1"/>
    <property type="molecule type" value="Genomic_DNA"/>
</dbReference>
<dbReference type="CCDS" id="CCDS4756.1">
    <molecule id="P28062-2"/>
</dbReference>
<dbReference type="CCDS" id="CCDS4757.1">
    <molecule id="P28062-1"/>
</dbReference>
<dbReference type="PIR" id="A44324">
    <property type="entry name" value="A44324"/>
</dbReference>
<dbReference type="PIR" id="C44324">
    <property type="entry name" value="C44324"/>
</dbReference>
<dbReference type="PIR" id="G01564">
    <property type="entry name" value="G01564"/>
</dbReference>
<dbReference type="PIR" id="G02018">
    <property type="entry name" value="G02018"/>
</dbReference>
<dbReference type="RefSeq" id="NP_004150.1">
    <molecule id="P28062-2"/>
    <property type="nucleotide sequence ID" value="NM_004159.5"/>
</dbReference>
<dbReference type="RefSeq" id="NP_683720.2">
    <molecule id="P28062-1"/>
    <property type="nucleotide sequence ID" value="NM_148919.4"/>
</dbReference>
<dbReference type="PDB" id="5L5A">
    <property type="method" value="X-ray"/>
    <property type="resolution" value="2.40 A"/>
    <property type="chains" value="K/Y=73-210"/>
</dbReference>
<dbReference type="PDB" id="5L5B">
    <property type="method" value="X-ray"/>
    <property type="resolution" value="2.80 A"/>
    <property type="chains" value="K/Y=73-210"/>
</dbReference>
<dbReference type="PDB" id="5L5D">
    <property type="method" value="X-ray"/>
    <property type="resolution" value="2.80 A"/>
    <property type="chains" value="K/Y=73-210"/>
</dbReference>
<dbReference type="PDB" id="5L5E">
    <property type="method" value="X-ray"/>
    <property type="resolution" value="2.90 A"/>
    <property type="chains" value="K/Y=73-210"/>
</dbReference>
<dbReference type="PDB" id="5L5F">
    <property type="method" value="X-ray"/>
    <property type="resolution" value="2.50 A"/>
    <property type="chains" value="K/Y=73-210"/>
</dbReference>
<dbReference type="PDB" id="5L5H">
    <property type="method" value="X-ray"/>
    <property type="resolution" value="2.60 A"/>
    <property type="chains" value="K/Y=73-210"/>
</dbReference>
<dbReference type="PDB" id="5L5I">
    <property type="method" value="X-ray"/>
    <property type="resolution" value="2.90 A"/>
    <property type="chains" value="K/Y=73-210"/>
</dbReference>
<dbReference type="PDB" id="5L5J">
    <property type="method" value="X-ray"/>
    <property type="resolution" value="2.90 A"/>
    <property type="chains" value="K/Y=73-210"/>
</dbReference>
<dbReference type="PDB" id="5L5O">
    <property type="method" value="X-ray"/>
    <property type="resolution" value="2.60 A"/>
    <property type="chains" value="K/Y=73-210"/>
</dbReference>
<dbReference type="PDB" id="5L5P">
    <property type="method" value="X-ray"/>
    <property type="resolution" value="2.80 A"/>
    <property type="chains" value="K/Y=73-210"/>
</dbReference>
<dbReference type="PDB" id="5L5Q">
    <property type="method" value="X-ray"/>
    <property type="resolution" value="2.80 A"/>
    <property type="chains" value="K/Y=73-210"/>
</dbReference>
<dbReference type="PDB" id="5L5R">
    <property type="method" value="X-ray"/>
    <property type="resolution" value="2.90 A"/>
    <property type="chains" value="K/Y=73-210"/>
</dbReference>
<dbReference type="PDB" id="5L5S">
    <property type="method" value="X-ray"/>
    <property type="resolution" value="2.60 A"/>
    <property type="chains" value="K/Y=73-210"/>
</dbReference>
<dbReference type="PDB" id="5L5T">
    <property type="method" value="X-ray"/>
    <property type="resolution" value="2.90 A"/>
    <property type="chains" value="K/Y=73-210"/>
</dbReference>
<dbReference type="PDB" id="5L5U">
    <property type="method" value="X-ray"/>
    <property type="resolution" value="2.60 A"/>
    <property type="chains" value="K/Y=73-210"/>
</dbReference>
<dbReference type="PDB" id="5L5V">
    <property type="method" value="X-ray"/>
    <property type="resolution" value="2.70 A"/>
    <property type="chains" value="K/Y=73-210"/>
</dbReference>
<dbReference type="PDB" id="5LTT">
    <property type="method" value="X-ray"/>
    <property type="resolution" value="2.70 A"/>
    <property type="chains" value="K/Y=73-210"/>
</dbReference>
<dbReference type="PDB" id="5M2B">
    <property type="method" value="X-ray"/>
    <property type="resolution" value="2.70 A"/>
    <property type="chains" value="K/Y=73-210"/>
</dbReference>
<dbReference type="PDB" id="6AVO">
    <property type="method" value="EM"/>
    <property type="resolution" value="3.80 A"/>
    <property type="chains" value="C/D=73-276"/>
</dbReference>
<dbReference type="PDB" id="6E5B">
    <property type="method" value="X-ray"/>
    <property type="resolution" value="2.77 A"/>
    <property type="chains" value="K/Y=1-276"/>
</dbReference>
<dbReference type="PDB" id="7AWE">
    <property type="method" value="X-ray"/>
    <property type="resolution" value="2.29 A"/>
    <property type="chains" value="L/Z=73-275"/>
</dbReference>
<dbReference type="PDB" id="7B12">
    <property type="method" value="X-ray"/>
    <property type="resolution" value="2.43 A"/>
    <property type="chains" value="L/Z=73-275"/>
</dbReference>
<dbReference type="PDBsum" id="5L5A"/>
<dbReference type="PDBsum" id="5L5B"/>
<dbReference type="PDBsum" id="5L5D"/>
<dbReference type="PDBsum" id="5L5E"/>
<dbReference type="PDBsum" id="5L5F"/>
<dbReference type="PDBsum" id="5L5H"/>
<dbReference type="PDBsum" id="5L5I"/>
<dbReference type="PDBsum" id="5L5J"/>
<dbReference type="PDBsum" id="5L5O"/>
<dbReference type="PDBsum" id="5L5P"/>
<dbReference type="PDBsum" id="5L5Q"/>
<dbReference type="PDBsum" id="5L5R"/>
<dbReference type="PDBsum" id="5L5S"/>
<dbReference type="PDBsum" id="5L5T"/>
<dbReference type="PDBsum" id="5L5U"/>
<dbReference type="PDBsum" id="5L5V"/>
<dbReference type="PDBsum" id="5LTT"/>
<dbReference type="PDBsum" id="5M2B"/>
<dbReference type="PDBsum" id="6AVO"/>
<dbReference type="PDBsum" id="6E5B"/>
<dbReference type="PDBsum" id="7AWE"/>
<dbReference type="PDBsum" id="7B12"/>
<dbReference type="EMDB" id="EMD-60139"/>
<dbReference type="EMDB" id="EMD-7010"/>
<dbReference type="SMR" id="P28062"/>
<dbReference type="BioGRID" id="111669">
    <property type="interactions" value="111"/>
</dbReference>
<dbReference type="ComplexPortal" id="CPX-9003">
    <property type="entry name" value="20S immunoproteasome complex"/>
</dbReference>
<dbReference type="FunCoup" id="P28062">
    <property type="interactions" value="687"/>
</dbReference>
<dbReference type="IntAct" id="P28062">
    <property type="interactions" value="65"/>
</dbReference>
<dbReference type="MINT" id="P28062"/>
<dbReference type="STRING" id="9606.ENSP00000364016"/>
<dbReference type="BindingDB" id="P28062"/>
<dbReference type="ChEMBL" id="CHEMBL5620"/>
<dbReference type="DrugBank" id="DB08889">
    <property type="generic name" value="Carfilzomib"/>
</dbReference>
<dbReference type="DrugCentral" id="P28062"/>
<dbReference type="GuidetoPHARMACOLOGY" id="2408"/>
<dbReference type="MEROPS" id="T01.015"/>
<dbReference type="GlyGen" id="P28062">
    <property type="glycosylation" value="1 site, 1 O-linked glycan (1 site)"/>
</dbReference>
<dbReference type="iPTMnet" id="P28062"/>
<dbReference type="PhosphoSitePlus" id="P28062"/>
<dbReference type="SwissPalm" id="P28062"/>
<dbReference type="BioMuta" id="PSMB8"/>
<dbReference type="DMDM" id="334302881"/>
<dbReference type="jPOST" id="P28062"/>
<dbReference type="MassIVE" id="P28062"/>
<dbReference type="PaxDb" id="9606-ENSP00000364016"/>
<dbReference type="PeptideAtlas" id="P28062"/>
<dbReference type="ProteomicsDB" id="54437">
    <molecule id="P28062-1"/>
</dbReference>
<dbReference type="ProteomicsDB" id="54438">
    <molecule id="P28062-2"/>
</dbReference>
<dbReference type="Pumba" id="P28062"/>
<dbReference type="Antibodypedia" id="28713">
    <property type="antibodies" value="406 antibodies from 40 providers"/>
</dbReference>
<dbReference type="DNASU" id="5696"/>
<dbReference type="Ensembl" id="ENST00000374881.3">
    <molecule id="P28062-2"/>
    <property type="protein sequence ID" value="ENSP00000364015.2"/>
    <property type="gene ID" value="ENSG00000204264.12"/>
</dbReference>
<dbReference type="Ensembl" id="ENST00000374882.8">
    <molecule id="P28062-1"/>
    <property type="protein sequence ID" value="ENSP00000364016.4"/>
    <property type="gene ID" value="ENSG00000204264.12"/>
</dbReference>
<dbReference type="Ensembl" id="ENST00000383236.8">
    <molecule id="P28062-1"/>
    <property type="protein sequence ID" value="ENSP00000372723.4"/>
    <property type="gene ID" value="ENSG00000206298.8"/>
</dbReference>
<dbReference type="Ensembl" id="ENST00000383238.4">
    <molecule id="P28062-2"/>
    <property type="protein sequence ID" value="ENSP00000372725.4"/>
    <property type="gene ID" value="ENSG00000206298.8"/>
</dbReference>
<dbReference type="Ensembl" id="ENST00000416134.2">
    <molecule id="P28062-2"/>
    <property type="protein sequence ID" value="ENSP00000397057.2"/>
    <property type="gene ID" value="ENSG00000235715.6"/>
</dbReference>
<dbReference type="Ensembl" id="ENST00000416564.2">
    <molecule id="P28062-2"/>
    <property type="protein sequence ID" value="ENSP00000408825.2"/>
    <property type="gene ID" value="ENSG00000226201.6"/>
</dbReference>
<dbReference type="Ensembl" id="ENST00000421445.6">
    <molecule id="P28062-1"/>
    <property type="protein sequence ID" value="ENSP00000402406.2"/>
    <property type="gene ID" value="ENSG00000236443.6"/>
</dbReference>
<dbReference type="Ensembl" id="ENST00000429645.6">
    <molecule id="P28062-1"/>
    <property type="protein sequence ID" value="ENSP00000394155.2"/>
    <property type="gene ID" value="ENSG00000226201.6"/>
</dbReference>
<dbReference type="Ensembl" id="ENST00000435978.6">
    <molecule id="P28062-2"/>
    <property type="protein sequence ID" value="ENSP00000414731.2"/>
    <property type="gene ID" value="ENSG00000231631.6"/>
</dbReference>
<dbReference type="Ensembl" id="ENST00000436627.2">
    <molecule id="P28062-2"/>
    <property type="protein sequence ID" value="ENSP00000392693.2"/>
    <property type="gene ID" value="ENSG00000230669.6"/>
</dbReference>
<dbReference type="Ensembl" id="ENST00000438442.6">
    <molecule id="P28062-1"/>
    <property type="protein sequence ID" value="ENSP00000404585.2"/>
    <property type="gene ID" value="ENSG00000231631.6"/>
</dbReference>
<dbReference type="Ensembl" id="ENST00000441960.6">
    <molecule id="P28062-2"/>
    <property type="protein sequence ID" value="ENSP00000407539.2"/>
    <property type="gene ID" value="ENSG00000230034.8"/>
</dbReference>
<dbReference type="Ensembl" id="ENST00000452573.2">
    <molecule id="P28062-2"/>
    <property type="protein sequence ID" value="ENSP00000412618.2"/>
    <property type="gene ID" value="ENSG00000236443.6"/>
</dbReference>
<dbReference type="Ensembl" id="ENST00000455660.6">
    <molecule id="P28062-1"/>
    <property type="protein sequence ID" value="ENSP00000406797.2"/>
    <property type="gene ID" value="ENSG00000230669.6"/>
</dbReference>
<dbReference type="Ensembl" id="ENST00000457261.6">
    <molecule id="P28062-1"/>
    <property type="protein sequence ID" value="ENSP00000414770.2"/>
    <property type="gene ID" value="ENSG00000235715.6"/>
</dbReference>
<dbReference type="GeneID" id="5696"/>
<dbReference type="KEGG" id="hsa:5696"/>
<dbReference type="MANE-Select" id="ENST00000374882.8">
    <property type="protein sequence ID" value="ENSP00000364016.4"/>
    <property type="RefSeq nucleotide sequence ID" value="NM_148919.4"/>
    <property type="RefSeq protein sequence ID" value="NP_683720.2"/>
</dbReference>
<dbReference type="UCSC" id="uc003ocf.4">
    <molecule id="P28062-1"/>
    <property type="organism name" value="human"/>
</dbReference>
<dbReference type="AGR" id="HGNC:9545"/>
<dbReference type="CTD" id="5696"/>
<dbReference type="DisGeNET" id="5696"/>
<dbReference type="GeneCards" id="PSMB8"/>
<dbReference type="HGNC" id="HGNC:9545">
    <property type="gene designation" value="PSMB8"/>
</dbReference>
<dbReference type="HPA" id="ENSG00000204264">
    <property type="expression patterns" value="Low tissue specificity"/>
</dbReference>
<dbReference type="MalaCards" id="PSMB8"/>
<dbReference type="MIM" id="177046">
    <property type="type" value="gene"/>
</dbReference>
<dbReference type="MIM" id="256040">
    <property type="type" value="phenotype"/>
</dbReference>
<dbReference type="neXtProt" id="NX_P28062"/>
<dbReference type="OpenTargets" id="ENSG00000204264"/>
<dbReference type="Orphanet" id="324977">
    <property type="disease" value="Proteasome-associated autoinflammatory syndrome"/>
</dbReference>
<dbReference type="PharmGKB" id="PA33890"/>
<dbReference type="VEuPathDB" id="HostDB:ENSG00000204264"/>
<dbReference type="eggNOG" id="KOG0175">
    <property type="taxonomic scope" value="Eukaryota"/>
</dbReference>
<dbReference type="GeneTree" id="ENSGT00940000157293"/>
<dbReference type="HOGENOM" id="CLU_035750_7_1_1"/>
<dbReference type="InParanoid" id="P28062"/>
<dbReference type="OMA" id="IQIEMAH"/>
<dbReference type="OrthoDB" id="37597at2759"/>
<dbReference type="PAN-GO" id="P28062">
    <property type="GO annotations" value="5 GO annotations based on evolutionary models"/>
</dbReference>
<dbReference type="PhylomeDB" id="P28062"/>
<dbReference type="TreeFam" id="TF106223"/>
<dbReference type="PathwayCommons" id="P28062"/>
<dbReference type="Reactome" id="R-HSA-909733">
    <property type="pathway name" value="Interferon alpha/beta signaling"/>
</dbReference>
<dbReference type="Reactome" id="R-HSA-9907900">
    <property type="pathway name" value="Proteasome assembly"/>
</dbReference>
<dbReference type="SignaLink" id="P28062"/>
<dbReference type="SIGNOR" id="P28062"/>
<dbReference type="BioGRID-ORCS" id="5696">
    <property type="hits" value="12 hits in 1176 CRISPR screens"/>
</dbReference>
<dbReference type="ChiTaRS" id="PSMB8">
    <property type="organism name" value="human"/>
</dbReference>
<dbReference type="GeneWiki" id="PSMB8"/>
<dbReference type="GenomeRNAi" id="5696"/>
<dbReference type="Pharos" id="P28062">
    <property type="development level" value="Tclin"/>
</dbReference>
<dbReference type="PRO" id="PR:P28062"/>
<dbReference type="Proteomes" id="UP000005640">
    <property type="component" value="Chromosome 6"/>
</dbReference>
<dbReference type="RNAct" id="P28062">
    <property type="molecule type" value="protein"/>
</dbReference>
<dbReference type="Bgee" id="ENSG00000204264">
    <property type="expression patterns" value="Expressed in granulocyte and 96 other cell types or tissues"/>
</dbReference>
<dbReference type="ExpressionAtlas" id="P28062">
    <property type="expression patterns" value="baseline and differential"/>
</dbReference>
<dbReference type="GO" id="GO:0005829">
    <property type="term" value="C:cytosol"/>
    <property type="evidence" value="ECO:0000318"/>
    <property type="project" value="GO_Central"/>
</dbReference>
<dbReference type="GO" id="GO:0070062">
    <property type="term" value="C:extracellular exosome"/>
    <property type="evidence" value="ECO:0007005"/>
    <property type="project" value="UniProtKB"/>
</dbReference>
<dbReference type="GO" id="GO:0005654">
    <property type="term" value="C:nucleoplasm"/>
    <property type="evidence" value="ECO:0000304"/>
    <property type="project" value="Reactome"/>
</dbReference>
<dbReference type="GO" id="GO:0005634">
    <property type="term" value="C:nucleus"/>
    <property type="evidence" value="ECO:0000318"/>
    <property type="project" value="GO_Central"/>
</dbReference>
<dbReference type="GO" id="GO:0000502">
    <property type="term" value="C:proteasome complex"/>
    <property type="evidence" value="ECO:0000314"/>
    <property type="project" value="UniProtKB"/>
</dbReference>
<dbReference type="GO" id="GO:0005839">
    <property type="term" value="C:proteasome core complex"/>
    <property type="evidence" value="ECO:0000250"/>
    <property type="project" value="UniProtKB"/>
</dbReference>
<dbReference type="GO" id="GO:0019774">
    <property type="term" value="C:proteasome core complex, beta-subunit complex"/>
    <property type="evidence" value="ECO:0000250"/>
    <property type="project" value="UniProtKB"/>
</dbReference>
<dbReference type="GO" id="GO:1990111">
    <property type="term" value="C:spermatoproteasome complex"/>
    <property type="evidence" value="ECO:0000250"/>
    <property type="project" value="UniProtKB"/>
</dbReference>
<dbReference type="GO" id="GO:0004175">
    <property type="term" value="F:endopeptidase activity"/>
    <property type="evidence" value="ECO:0000318"/>
    <property type="project" value="GO_Central"/>
</dbReference>
<dbReference type="GO" id="GO:0004298">
    <property type="term" value="F:threonine-type endopeptidase activity"/>
    <property type="evidence" value="ECO:0007669"/>
    <property type="project" value="UniProtKB-KW"/>
</dbReference>
<dbReference type="GO" id="GO:0019882">
    <property type="term" value="P:antigen processing and presentation"/>
    <property type="evidence" value="ECO:0007669"/>
    <property type="project" value="Ensembl"/>
</dbReference>
<dbReference type="GO" id="GO:0045444">
    <property type="term" value="P:fat cell differentiation"/>
    <property type="evidence" value="ECO:0000315"/>
    <property type="project" value="UniProtKB"/>
</dbReference>
<dbReference type="GO" id="GO:0043161">
    <property type="term" value="P:proteasome-mediated ubiquitin-dependent protein catabolic process"/>
    <property type="evidence" value="ECO:0000315"/>
    <property type="project" value="UniProtKB"/>
</dbReference>
<dbReference type="CDD" id="cd03761">
    <property type="entry name" value="proteasome_beta_type_5"/>
    <property type="match status" value="1"/>
</dbReference>
<dbReference type="FunFam" id="3.60.20.10:FF:000038">
    <property type="entry name" value="Proteasome subunit beta"/>
    <property type="match status" value="1"/>
</dbReference>
<dbReference type="Gene3D" id="3.60.20.10">
    <property type="entry name" value="Glutamine Phosphoribosylpyrophosphate, subunit 1, domain 1"/>
    <property type="match status" value="1"/>
</dbReference>
<dbReference type="InterPro" id="IPR029055">
    <property type="entry name" value="Ntn_hydrolases_N"/>
</dbReference>
<dbReference type="InterPro" id="IPR000243">
    <property type="entry name" value="Pept_T1A_subB"/>
</dbReference>
<dbReference type="InterPro" id="IPR016050">
    <property type="entry name" value="Proteasome_bsu_CS"/>
</dbReference>
<dbReference type="InterPro" id="IPR001353">
    <property type="entry name" value="Proteasome_sua/b"/>
</dbReference>
<dbReference type="InterPro" id="IPR023333">
    <property type="entry name" value="Proteasome_suB-type"/>
</dbReference>
<dbReference type="PANTHER" id="PTHR32194">
    <property type="entry name" value="METALLOPROTEASE TLDD"/>
    <property type="match status" value="1"/>
</dbReference>
<dbReference type="PANTHER" id="PTHR32194:SF8">
    <property type="entry name" value="PROTEASOME SUBUNIT BETA"/>
    <property type="match status" value="1"/>
</dbReference>
<dbReference type="Pfam" id="PF00227">
    <property type="entry name" value="Proteasome"/>
    <property type="match status" value="1"/>
</dbReference>
<dbReference type="PRINTS" id="PR00141">
    <property type="entry name" value="PROTEASOME"/>
</dbReference>
<dbReference type="SUPFAM" id="SSF56235">
    <property type="entry name" value="N-terminal nucleophile aminohydrolases (Ntn hydrolases)"/>
    <property type="match status" value="1"/>
</dbReference>
<dbReference type="PROSITE" id="PS00854">
    <property type="entry name" value="PROTEASOME_BETA_1"/>
    <property type="match status" value="1"/>
</dbReference>
<dbReference type="PROSITE" id="PS51476">
    <property type="entry name" value="PROTEASOME_BETA_2"/>
    <property type="match status" value="1"/>
</dbReference>
<comment type="function">
    <text evidence="12 15 20 24 25">The proteasome is a multicatalytic proteinase complex which is characterized by its ability to cleave peptides with Arg, Phe, Tyr, Leu, and Glu adjacent to the leaving group at neutral or slightly basic pH. The proteasome has an ATP-dependent proteolytic activity. This subunit is involved in antigen processing to generate class I binding peptides. Replacement of PSMB5 by PSMB8 increases the capacity of the immunoproteasome to cleave model peptides after hydrophobic and basic residues. Involved in the generation of spliced peptides resulting from the ligation of two separate proteasomal cleavage products that are not contiguous in the parental protein (PubMed:27049119). Acts as a major component of interferon gamma-induced sensitivity. Plays a key role in apoptosis via the degradation of the apoptotic inhibitor MCL1. May be involved in the inflammatory response pathway. In cancer cells, substitution of isoform 1 (E2) by isoform 2 (E1) results in immunoproteasome deficiency. Required for the differentiation of preadipocytes into adipocytes.</text>
</comment>
<comment type="catalytic activity">
    <reaction>
        <text>Cleavage of peptide bonds with very broad specificity.</text>
        <dbReference type="EC" id="3.4.25.1"/>
    </reaction>
</comment>
<comment type="subunit">
    <text evidence="8 11">The 26S proteasome consists of a 20S proteasome core and two 19S regulatory subunits. The 20S proteasome core is composed of 28 subunits that are arranged in four stacked rings, resulting in a barrel-shaped structure. The two end rings are each formed by seven alpha subunits, and the two central rings are each formed by seven beta subunits. The catalytic chamber with the active sites is on the inside of the barrel. Component of the immunoproteasome, where it displaces the equivalent housekeeping subunit PSMB5. Component of the spermatoproteasome, a form of the proteasome specifically found in testis. Directly interacts with POMP. Interacts with TAP1.</text>
</comment>
<comment type="subunit">
    <text evidence="7">(Microbial infection) Interacts with HIV-1 TAT protein.</text>
</comment>
<comment type="interaction">
    <interactant intactId="EBI-372294">
        <id>P28062</id>
    </interactant>
    <interactant intactId="EBI-3649474">
        <id>PRO_0000037573</id>
        <dbReference type="UniProtKB" id="P27958"/>
    </interactant>
    <organismsDiffer>true</organismsDiffer>
    <experiments>4</experiments>
</comment>
<comment type="interaction">
    <interactant intactId="EBI-372312">
        <id>P28062-2</id>
    </interactant>
    <interactant intactId="EBI-77613">
        <id>P05067</id>
        <label>APP</label>
    </interactant>
    <organismsDiffer>false</organismsDiffer>
    <experiments>3</experiments>
</comment>
<comment type="interaction">
    <interactant intactId="EBI-372312">
        <id>P28062-2</id>
    </interactant>
    <interactant intactId="EBI-930964">
        <id>P54253</id>
        <label>ATXN1</label>
    </interactant>
    <organismsDiffer>false</organismsDiffer>
    <experiments>6</experiments>
</comment>
<comment type="interaction">
    <interactant intactId="EBI-372312">
        <id>P28062-2</id>
    </interactant>
    <interactant intactId="EBI-724940">
        <id>Q9BVJ7</id>
        <label>DUSP23</label>
    </interactant>
    <organismsDiffer>false</organismsDiffer>
    <experiments>5</experiments>
</comment>
<comment type="interaction">
    <interactant intactId="EBI-372312">
        <id>P28062-2</id>
    </interactant>
    <interactant intactId="EBI-3913338">
        <id>Q96EK6</id>
        <label>GNPNAT1</label>
    </interactant>
    <organismsDiffer>false</organismsDiffer>
    <experiments>3</experiments>
</comment>
<comment type="interaction">
    <interactant intactId="EBI-372312">
        <id>P28062-2</id>
    </interactant>
    <interactant intactId="EBI-747754">
        <id>P28799</id>
        <label>GRN</label>
    </interactant>
    <organismsDiffer>false</organismsDiffer>
    <experiments>3</experiments>
</comment>
<comment type="interaction">
    <interactant intactId="EBI-372312">
        <id>P28062-2</id>
    </interactant>
    <interactant intactId="EBI-352682">
        <id>P04792</id>
        <label>HSPB1</label>
    </interactant>
    <organismsDiffer>false</organismsDiffer>
    <experiments>3</experiments>
</comment>
<comment type="interaction">
    <interactant intactId="EBI-372312">
        <id>P28062-2</id>
    </interactant>
    <interactant intactId="EBI-466029">
        <id>P42858</id>
        <label>HTT</label>
    </interactant>
    <organismsDiffer>false</organismsDiffer>
    <experiments>3</experiments>
</comment>
<comment type="interaction">
    <interactant intactId="EBI-372312">
        <id>P28062-2</id>
    </interactant>
    <interactant intactId="EBI-6509505">
        <id>Q0VD86</id>
        <label>INCA1</label>
    </interactant>
    <organismsDiffer>false</organismsDiffer>
    <experiments>3</experiments>
</comment>
<comment type="interaction">
    <interactant intactId="EBI-372312">
        <id>P28062-2</id>
    </interactant>
    <interactant intactId="EBI-10975473">
        <id>O60333-2</id>
        <label>KIF1B</label>
    </interactant>
    <organismsDiffer>false</organismsDiffer>
    <experiments>3</experiments>
</comment>
<comment type="interaction">
    <interactant intactId="EBI-372312">
        <id>P28062-2</id>
    </interactant>
    <interactant intactId="EBI-347619">
        <id>O15116</id>
        <label>LSM1</label>
    </interactant>
    <organismsDiffer>false</organismsDiffer>
    <experiments>3</experiments>
</comment>
<comment type="interaction">
    <interactant intactId="EBI-372312">
        <id>P28062-2</id>
    </interactant>
    <interactant intactId="EBI-16439278">
        <id>Q6FHY5</id>
        <label>MEOX2</label>
    </interactant>
    <organismsDiffer>false</organismsDiffer>
    <experiments>3</experiments>
</comment>
<comment type="interaction">
    <interactant intactId="EBI-372312">
        <id>P28062-2</id>
    </interactant>
    <interactant intactId="EBI-10271199">
        <id>Q8NI38</id>
        <label>NFKBID</label>
    </interactant>
    <organismsDiffer>false</organismsDiffer>
    <experiments>3</experiments>
</comment>
<comment type="interaction">
    <interactant intactId="EBI-372312">
        <id>P28062-2</id>
    </interactant>
    <interactant intactId="EBI-357275">
        <id>Q99471</id>
        <label>PFDN5</label>
    </interactant>
    <organismsDiffer>false</organismsDiffer>
    <experiments>3</experiments>
</comment>
<comment type="interaction">
    <interactant intactId="EBI-372312">
        <id>P28062-2</id>
    </interactant>
    <interactant intactId="EBI-347928">
        <id>P62487</id>
        <label>POLR2G</label>
    </interactant>
    <organismsDiffer>false</organismsDiffer>
    <experiments>3</experiments>
</comment>
<comment type="interaction">
    <interactant intactId="EBI-372312">
        <id>P28062-2</id>
    </interactant>
    <interactant intactId="EBI-10829018">
        <id>Q04864-2</id>
        <label>REL</label>
    </interactant>
    <organismsDiffer>false</organismsDiffer>
    <experiments>3</experiments>
</comment>
<comment type="interaction">
    <interactant intactId="EBI-372312">
        <id>P28062-2</id>
    </interactant>
    <interactant intactId="EBI-396669">
        <id>Q9Y3C5</id>
        <label>RNF11</label>
    </interactant>
    <organismsDiffer>false</organismsDiffer>
    <experiments>3</experiments>
</comment>
<comment type="interaction">
    <interactant intactId="EBI-372312">
        <id>P28062-2</id>
    </interactant>
    <interactant intactId="EBI-12229025">
        <id>Q9Y5X3-2</id>
        <label>SNX5</label>
    </interactant>
    <organismsDiffer>false</organismsDiffer>
    <experiments>3</experiments>
</comment>
<comment type="interaction">
    <interactant intactId="EBI-372312">
        <id>P28062-2</id>
    </interactant>
    <interactant intactId="EBI-990792">
        <id>P00441</id>
        <label>SOD1</label>
    </interactant>
    <organismsDiffer>false</organismsDiffer>
    <experiments>3</experiments>
</comment>
<comment type="interaction">
    <interactant intactId="EBI-372312">
        <id>P28062-2</id>
    </interactant>
    <interactant intactId="EBI-372899">
        <id>Q13148</id>
        <label>TARDBP</label>
    </interactant>
    <organismsDiffer>false</organismsDiffer>
    <experiments>6</experiments>
</comment>
<comment type="interaction">
    <interactant intactId="EBI-372312">
        <id>P28062-2</id>
    </interactant>
    <interactant intactId="EBI-752030">
        <id>Q96A09</id>
        <label>TENT5B</label>
    </interactant>
    <organismsDiffer>false</organismsDiffer>
    <experiments>3</experiments>
</comment>
<comment type="interaction">
    <interactant intactId="EBI-372312">
        <id>P28062-2</id>
    </interactant>
    <interactant intactId="EBI-357631">
        <id>Q13114</id>
        <label>TRAF3</label>
    </interactant>
    <organismsDiffer>false</organismsDiffer>
    <experiments>3</experiments>
</comment>
<comment type="interaction">
    <interactant intactId="EBI-372312">
        <id>P28062-2</id>
    </interactant>
    <interactant intactId="EBI-358993">
        <id>Q15645</id>
        <label>TRIP13</label>
    </interactant>
    <organismsDiffer>false</organismsDiffer>
    <experiments>3</experiments>
</comment>
<comment type="interaction">
    <interactant intactId="EBI-372312">
        <id>P28062-2</id>
    </interactant>
    <interactant intactId="EBI-2514383">
        <id>Q5T6F2</id>
        <label>UBAP2</label>
    </interactant>
    <organismsDiffer>false</organismsDiffer>
    <experiments>3</experiments>
</comment>
<comment type="interaction">
    <interactant intactId="EBI-372312">
        <id>P28062-2</id>
    </interactant>
    <interactant intactId="EBI-720609">
        <id>O76024</id>
        <label>WFS1</label>
    </interactant>
    <organismsDiffer>false</organismsDiffer>
    <experiments>3</experiments>
</comment>
<comment type="interaction">
    <interactant intactId="EBI-372312">
        <id>P28062-2</id>
    </interactant>
    <interactant intactId="EBI-12040603">
        <id>Q9NZC7-5</id>
        <label>WWOX</label>
    </interactant>
    <organismsDiffer>false</organismsDiffer>
    <experiments>3</experiments>
</comment>
<comment type="interaction">
    <interactant intactId="EBI-372312">
        <id>P28062-2</id>
    </interactant>
    <interactant intactId="EBI-13070200">
        <id>A6XGL0</id>
        <label>YJEFN3</label>
    </interactant>
    <organismsDiffer>false</organismsDiffer>
    <experiments>3</experiments>
</comment>
<comment type="interaction">
    <interactant intactId="EBI-372312">
        <id>P28062-2</id>
    </interactant>
    <interactant intactId="EBI-12030590">
        <id>Q9H0C1</id>
        <label>ZMYND12</label>
    </interactant>
    <organismsDiffer>false</organismsDiffer>
    <experiments>3</experiments>
</comment>
<comment type="subcellular location">
    <subcellularLocation>
        <location evidence="3">Cytoplasm</location>
    </subcellularLocation>
    <subcellularLocation>
        <location evidence="1">Nucleus</location>
    </subcellularLocation>
</comment>
<comment type="alternative products">
    <event type="alternative splicing"/>
    <isoform>
        <id>P28062-1</id>
        <name>1</name>
        <name>LMP7B</name>
        <name>LMP7-E2</name>
        <sequence type="displayed"/>
    </isoform>
    <isoform>
        <id>P28062-2</id>
        <name>2</name>
        <name>LMP7A</name>
        <name>LMP7-E1</name>
        <sequence type="described" ref="VSP_005287"/>
    </isoform>
    <text>Additional isoforms seem to exist.</text>
</comment>
<comment type="developmental stage">
    <text evidence="6">Highly expressed in immature dendritic cells (at protein level).</text>
</comment>
<comment type="induction">
    <text evidence="5 9 10 13 14 15 16 17 26">Up-regulated by IFNG/IFN-gamma and IRF1 (at protein level). Up-regulated by TNF (at protein level). Up-regulated by tetrodotoxin (TTX) in glial cells. Up-regulated in Crohn's bowel disease (CD). Down-regulated by the selective inhibitor PR-957. Down-regulated in mature dendritic cells by HSV-1 infection. Up-regulated by heat shock treatment.</text>
</comment>
<comment type="PTM">
    <text evidence="2">Autocleaved. The resulting N-terminal Thr residue of the mature subunit is responsible for the nucleophile proteolytic activity.</text>
</comment>
<comment type="disease" evidence="18 19 20 21 22 23">
    <disease id="DI-03009">
        <name>Proteasome-associated autoinflammatory syndrome 1</name>
        <acronym>PRAAS1</acronym>
        <description>An autosomal recessive autoinflammatory disorder characterized by early childhood onset of recurrent fever, joint stiffness and severe contractures of the hands and feet, and erythematous skin lesions with subsequent development of lipodystrophy and laboratory evidence of immune dysregulation. Accompanying features may include muscle weakness and atrophy, hepatosplenomegaly, and microcytic anemia.</description>
        <dbReference type="MIM" id="256040"/>
    </disease>
    <text>The disease is caused by variants affecting the gene represented in this entry.</text>
</comment>
<comment type="similarity">
    <text evidence="3">Belongs to the peptidase T1B family.</text>
</comment>
<organism>
    <name type="scientific">Homo sapiens</name>
    <name type="common">Human</name>
    <dbReference type="NCBI Taxonomy" id="9606"/>
    <lineage>
        <taxon>Eukaryota</taxon>
        <taxon>Metazoa</taxon>
        <taxon>Chordata</taxon>
        <taxon>Craniata</taxon>
        <taxon>Vertebrata</taxon>
        <taxon>Euteleostomi</taxon>
        <taxon>Mammalia</taxon>
        <taxon>Eutheria</taxon>
        <taxon>Euarchontoglires</taxon>
        <taxon>Primates</taxon>
        <taxon>Haplorrhini</taxon>
        <taxon>Catarrhini</taxon>
        <taxon>Hominidae</taxon>
        <taxon>Homo</taxon>
    </lineage>
</organism>
<evidence type="ECO:0000250" key="1"/>
<evidence type="ECO:0000250" key="2">
    <source>
        <dbReference type="UniProtKB" id="O35955"/>
    </source>
</evidence>
<evidence type="ECO:0000255" key="3">
    <source>
        <dbReference type="PROSITE-ProRule" id="PRU00809"/>
    </source>
</evidence>
<evidence type="ECO:0000256" key="4">
    <source>
        <dbReference type="SAM" id="MobiDB-lite"/>
    </source>
</evidence>
<evidence type="ECO:0000269" key="5">
    <source>
    </source>
</evidence>
<evidence type="ECO:0000269" key="6">
    <source>
    </source>
</evidence>
<evidence type="ECO:0000269" key="7">
    <source>
    </source>
</evidence>
<evidence type="ECO:0000269" key="8">
    <source>
    </source>
</evidence>
<evidence type="ECO:0000269" key="9">
    <source>
    </source>
</evidence>
<evidence type="ECO:0000269" key="10">
    <source>
    </source>
</evidence>
<evidence type="ECO:0000269" key="11">
    <source>
    </source>
</evidence>
<evidence type="ECO:0000269" key="12">
    <source>
    </source>
</evidence>
<evidence type="ECO:0000269" key="13">
    <source>
    </source>
</evidence>
<evidence type="ECO:0000269" key="14">
    <source>
    </source>
</evidence>
<evidence type="ECO:0000269" key="15">
    <source>
    </source>
</evidence>
<evidence type="ECO:0000269" key="16">
    <source>
    </source>
</evidence>
<evidence type="ECO:0000269" key="17">
    <source>
    </source>
</evidence>
<evidence type="ECO:0000269" key="18">
    <source>
    </source>
</evidence>
<evidence type="ECO:0000269" key="19">
    <source>
    </source>
</evidence>
<evidence type="ECO:0000269" key="20">
    <source>
    </source>
</evidence>
<evidence type="ECO:0000269" key="21">
    <source>
    </source>
</evidence>
<evidence type="ECO:0000269" key="22">
    <source>
    </source>
</evidence>
<evidence type="ECO:0000269" key="23">
    <source>
    </source>
</evidence>
<evidence type="ECO:0000269" key="24">
    <source>
    </source>
</evidence>
<evidence type="ECO:0000269" key="25">
    <source>
    </source>
</evidence>
<evidence type="ECO:0000269" key="26">
    <source>
    </source>
</evidence>
<evidence type="ECO:0000269" key="27">
    <source ref="7"/>
</evidence>
<evidence type="ECO:0000303" key="28">
    <source>
    </source>
</evidence>
<evidence type="ECO:0000303" key="29">
    <source>
    </source>
</evidence>
<evidence type="ECO:0000305" key="30"/>
<evidence type="ECO:0007829" key="31">
    <source>
        <dbReference type="PDB" id="7AWE"/>
    </source>
</evidence>